<protein>
    <recommendedName>
        <fullName evidence="6">Citrate exporter 1</fullName>
    </recommendedName>
</protein>
<name>CEX1_ASPNA</name>
<evidence type="ECO:0000255" key="1"/>
<evidence type="ECO:0000255" key="2">
    <source>
        <dbReference type="PROSITE-ProRule" id="PRU00498"/>
    </source>
</evidence>
<evidence type="ECO:0000256" key="3">
    <source>
        <dbReference type="SAM" id="MobiDB-lite"/>
    </source>
</evidence>
<evidence type="ECO:0000269" key="4">
    <source>
    </source>
</evidence>
<evidence type="ECO:0000269" key="5">
    <source>
    </source>
</evidence>
<evidence type="ECO:0000303" key="6">
    <source>
    </source>
</evidence>
<evidence type="ECO:0000303" key="7">
    <source>
    </source>
</evidence>
<evidence type="ECO:0000305" key="8"/>
<evidence type="ECO:0000305" key="9">
    <source>
    </source>
</evidence>
<evidence type="ECO:0000305" key="10">
    <source>
    </source>
</evidence>
<evidence type="ECO:0000312" key="11">
    <source>
        <dbReference type="EMBL" id="EHA22412.1"/>
    </source>
</evidence>
<evidence type="ECO:0000312" key="12">
    <source>
        <dbReference type="Proteomes" id="UP000009038"/>
    </source>
</evidence>
<proteinExistence type="inferred from homology"/>
<feature type="chain" id="PRO_0000452022" description="Citrate exporter 1">
    <location>
        <begin position="1"/>
        <end position="524"/>
    </location>
</feature>
<feature type="transmembrane region" description="Helical" evidence="1">
    <location>
        <begin position="60"/>
        <end position="80"/>
    </location>
</feature>
<feature type="transmembrane region" description="Helical" evidence="1">
    <location>
        <begin position="95"/>
        <end position="115"/>
    </location>
</feature>
<feature type="transmembrane region" description="Helical" evidence="1">
    <location>
        <begin position="125"/>
        <end position="145"/>
    </location>
</feature>
<feature type="transmembrane region" description="Helical" evidence="1">
    <location>
        <begin position="155"/>
        <end position="175"/>
    </location>
</feature>
<feature type="transmembrane region" description="Helical" evidence="1">
    <location>
        <begin position="186"/>
        <end position="206"/>
    </location>
</feature>
<feature type="transmembrane region" description="Helical" evidence="1">
    <location>
        <begin position="215"/>
        <end position="235"/>
    </location>
</feature>
<feature type="transmembrane region" description="Helical" evidence="1">
    <location>
        <begin position="296"/>
        <end position="316"/>
    </location>
</feature>
<feature type="transmembrane region" description="Helical" evidence="1">
    <location>
        <begin position="332"/>
        <end position="352"/>
    </location>
</feature>
<feature type="transmembrane region" description="Helical" evidence="1">
    <location>
        <begin position="395"/>
        <end position="415"/>
    </location>
</feature>
<feature type="transmembrane region" description="Helical" evidence="1">
    <location>
        <begin position="417"/>
        <end position="437"/>
    </location>
</feature>
<feature type="transmembrane region" description="Helical" evidence="1">
    <location>
        <begin position="459"/>
        <end position="479"/>
    </location>
</feature>
<feature type="transmembrane region" description="Helical" evidence="1">
    <location>
        <begin position="481"/>
        <end position="501"/>
    </location>
</feature>
<feature type="region of interest" description="Disordered" evidence="3">
    <location>
        <begin position="1"/>
        <end position="49"/>
    </location>
</feature>
<feature type="compositionally biased region" description="Polar residues" evidence="3">
    <location>
        <begin position="34"/>
        <end position="45"/>
    </location>
</feature>
<feature type="glycosylation site" description="N-linked (GlcNAc...) asparagine" evidence="2">
    <location>
        <position position="90"/>
    </location>
</feature>
<feature type="glycosylation site" description="N-linked (GlcNAc...) asparagine" evidence="2">
    <location>
        <position position="244"/>
    </location>
</feature>
<accession>G3Y4N5</accession>
<gene>
    <name evidence="8" type="primary">cex1</name>
    <name evidence="6" type="synonym">cexA</name>
    <name evidence="8" type="ORF">ASPNIDRAFT2_1165828</name>
    <name evidence="11" type="ORF">ASPNIDRAFT_57285</name>
</gene>
<comment type="function">
    <text evidence="4 5">Transmembrane transporter that exports citrate across the cell membrane.</text>
</comment>
<comment type="catalytic activity">
    <reaction evidence="9 10">
        <text>citrate(in) = citrate(out)</text>
        <dbReference type="Rhea" id="RHEA:33183"/>
        <dbReference type="ChEBI" id="CHEBI:16947"/>
    </reaction>
</comment>
<comment type="subcellular location">
    <subcellularLocation>
        <location evidence="9 10">Cell membrane</location>
        <topology evidence="1">Multi-pass membrane protein</topology>
    </subcellularLocation>
</comment>
<comment type="disruption phenotype">
    <text evidence="4">Decreases concentration of citric acid and increases concentration of oxalic acid in growth medium.</text>
</comment>
<comment type="similarity">
    <text evidence="8">Belongs to the major facilitator superfamily.</text>
</comment>
<comment type="sequence caution" evidence="8">
    <conflict type="erroneous gene model prediction">
        <sequence resource="EMBL-CDS" id="EHA22412"/>
    </conflict>
</comment>
<dbReference type="EMBL" id="ACJE01000012">
    <property type="protein sequence ID" value="EHA22412.1"/>
    <property type="status" value="ALT_SEQ"/>
    <property type="molecule type" value="Genomic_DNA"/>
</dbReference>
<dbReference type="SMR" id="G3Y4N5"/>
<dbReference type="STRING" id="380704.G3Y4N5"/>
<dbReference type="GlyCosmos" id="G3Y4N5">
    <property type="glycosylation" value="2 sites, No reported glycans"/>
</dbReference>
<dbReference type="HOGENOM" id="CLU_008455_8_4_1"/>
<dbReference type="OrthoDB" id="132652at5052"/>
<dbReference type="Proteomes" id="UP000009038">
    <property type="component" value="Unassembled WGS sequence"/>
</dbReference>
<dbReference type="GO" id="GO:0005886">
    <property type="term" value="C:plasma membrane"/>
    <property type="evidence" value="ECO:0000305"/>
    <property type="project" value="UniProtKB"/>
</dbReference>
<dbReference type="GO" id="GO:0015137">
    <property type="term" value="F:citrate transmembrane transporter activity"/>
    <property type="evidence" value="ECO:0000315"/>
    <property type="project" value="UniProtKB"/>
</dbReference>
<dbReference type="GO" id="GO:0015746">
    <property type="term" value="P:citrate transport"/>
    <property type="evidence" value="ECO:0000315"/>
    <property type="project" value="UniProtKB"/>
</dbReference>
<dbReference type="GO" id="GO:0140115">
    <property type="term" value="P:export across plasma membrane"/>
    <property type="evidence" value="ECO:0000315"/>
    <property type="project" value="UniProtKB"/>
</dbReference>
<dbReference type="FunFam" id="1.20.1250.20:FF:000172">
    <property type="entry name" value="MFS multidrug resistance transporter"/>
    <property type="match status" value="1"/>
</dbReference>
<dbReference type="FunFam" id="1.20.1720.10:FF:000009">
    <property type="entry name" value="MFS multidrug transporter"/>
    <property type="match status" value="1"/>
</dbReference>
<dbReference type="Gene3D" id="1.20.1250.20">
    <property type="entry name" value="MFS general substrate transporter like domains"/>
    <property type="match status" value="1"/>
</dbReference>
<dbReference type="InterPro" id="IPR011701">
    <property type="entry name" value="MFS"/>
</dbReference>
<dbReference type="InterPro" id="IPR020846">
    <property type="entry name" value="MFS_dom"/>
</dbReference>
<dbReference type="InterPro" id="IPR036259">
    <property type="entry name" value="MFS_trans_sf"/>
</dbReference>
<dbReference type="PANTHER" id="PTHR23502">
    <property type="entry name" value="MAJOR FACILITATOR SUPERFAMILY"/>
    <property type="match status" value="1"/>
</dbReference>
<dbReference type="PANTHER" id="PTHR23502:SF26">
    <property type="entry name" value="MAJOR FACILITATOR SUPERFAMILY (MFS) PROFILE DOMAIN-CONTAINING PROTEIN"/>
    <property type="match status" value="1"/>
</dbReference>
<dbReference type="Pfam" id="PF07690">
    <property type="entry name" value="MFS_1"/>
    <property type="match status" value="1"/>
</dbReference>
<dbReference type="PRINTS" id="PR01036">
    <property type="entry name" value="TCRTETB"/>
</dbReference>
<dbReference type="SUPFAM" id="SSF103473">
    <property type="entry name" value="MFS general substrate transporter"/>
    <property type="match status" value="1"/>
</dbReference>
<dbReference type="PROSITE" id="PS50850">
    <property type="entry name" value="MFS"/>
    <property type="match status" value="1"/>
</dbReference>
<reference evidence="12" key="1">
    <citation type="journal article" date="2011" name="Genome Res.">
        <title>Comparative genomics of citric-acid-producing Aspergillus niger ATCC 1015 versus enzyme-producing CBS 513.88.</title>
        <authorList>
            <person name="Andersen M.R."/>
            <person name="Salazar M.P."/>
            <person name="Schaap P.J."/>
            <person name="van de Vondervoort P.J.I."/>
            <person name="Culley D."/>
            <person name="Thykaer J."/>
            <person name="Frisvad J.C."/>
            <person name="Nielsen K.F."/>
            <person name="Albang R."/>
            <person name="Albermann K."/>
            <person name="Berka R.M."/>
            <person name="Braus G.H."/>
            <person name="Braus-Stromeyer S.A."/>
            <person name="Corrochano L.M."/>
            <person name="Dai Z."/>
            <person name="van Dijck P.W.M."/>
            <person name="Hofmann G."/>
            <person name="Lasure L.L."/>
            <person name="Magnuson J.K."/>
            <person name="Menke H."/>
            <person name="Meijer M."/>
            <person name="Meijer S.L."/>
            <person name="Nielsen J.B."/>
            <person name="Nielsen M.L."/>
            <person name="van Ooyen A.J.J."/>
            <person name="Pel H.J."/>
            <person name="Poulsen L."/>
            <person name="Samson R.A."/>
            <person name="Stam H."/>
            <person name="Tsang A."/>
            <person name="van den Brink J.M."/>
            <person name="Atkins A."/>
            <person name="Aerts A."/>
            <person name="Shapiro H."/>
            <person name="Pangilinan J."/>
            <person name="Salamov A."/>
            <person name="Lou Y."/>
            <person name="Lindquist E."/>
            <person name="Lucas S."/>
            <person name="Grimwood J."/>
            <person name="Grigoriev I.V."/>
            <person name="Kubicek C.P."/>
            <person name="Martinez D."/>
            <person name="van Peij N.N.M.E."/>
            <person name="Roubos J.A."/>
            <person name="Nielsen J."/>
            <person name="Baker S.E."/>
        </authorList>
    </citation>
    <scope>NUCLEOTIDE SEQUENCE [LARGE SCALE GENOMIC DNA]</scope>
    <source>
        <strain evidence="12">ATCC 1015 / CBS 113.46 / FGSC A1144 / LSHB Ac4 / NCTC 3858a / NRRL 328 / USDA 3528.7</strain>
    </source>
</reference>
<reference evidence="8" key="2">
    <citation type="journal article" date="2019" name="Metab. Eng.">
        <title>Engineering of the citrate exporter protein enables high citric acid production in Aspergillus niger.</title>
        <authorList>
            <person name="Steiger M.G."/>
            <person name="Rassinger A."/>
            <person name="Mattanovich D."/>
            <person name="Sauer M."/>
        </authorList>
    </citation>
    <scope>FUNCTION</scope>
    <scope>SUBCELLULAR LOCATION</scope>
    <scope>DISRUPTION PHENOTYPE</scope>
    <source>
        <strain evidence="6">ATCC 1015 / CBS 113.46 / FGSC A1144 / LSHB Ac4 / NCTC 3858a / NRRL 328 / USDA 3528.7</strain>
    </source>
</reference>
<reference evidence="8" key="3">
    <citation type="journal article" date="2020" name="FEMS Yeast Res.">
        <title>Identification of the citrate exporter Cex1 of Yarrowia lipolytica.</title>
        <authorList>
            <person name="Erian A.M."/>
            <person name="Egermeier M."/>
            <person name="Rassinger A."/>
            <person name="Marx H."/>
            <person name="Sauer M."/>
        </authorList>
    </citation>
    <scope>FUNCTION</scope>
    <scope>SUBCELLULAR LOCATION</scope>
    <source>
        <strain evidence="7">ATCC 1015 / CBS 113.46 / FGSC A1144 / LSHB Ac4 / NCTC 3858a / NRRL 328 / USDA 3528.7</strain>
    </source>
</reference>
<sequence length="524" mass="56776">MSSTTSSSRSDLEKVPVPQVTPRDSDSDKGSLSPEPSTLEAQSSEKPPHHIFTRSRKLQMVCIVSLAAIFSPLSSNIYFPALDDVSKSLNISMSLATLTITVYMIVQGLAPSFWGSMSDATGRRPVFIGTFIVYLVANIALAESKNYGELMAFRALQAAGSAATISIGAGVIGDITNSEERGSLVGIFGGVRMLGQGIGPVFGGIFTQYLGYRSIFWFLTIAGGVSLLSILVLLPETLRPIAGNGTVKLNGIHKPFIYTITGQTGVVEGAQPEAKKTKTSWKSVFAPLTFLVEKDVFITLFFGSIVYTVWSMVTSSTTDLFSEVYGLSSLDIGLTFLGNGFGCMSGSYLVGYLMDYNHRLTEREYCEKHGYPAGTRVNLKSHPDFPIEVARMRNTWWVIAIFIVTVALYGVSLRTHLAVPIILQYFIAFCSTGLFTINSALVIDLYPGASASATAVNNLMRCLLGAGGVAIVQPILDALKPDYTFLLLAGITLVMTPLLYVEDRWGPGWRHARERRLKAKANGN</sequence>
<organism evidence="12">
    <name type="scientific">Aspergillus niger (strain ATCC 1015 / CBS 113.46 / FGSC A1144 / LSHB Ac4 / NCTC 3858a / NRRL 328 / USDA 3528.7)</name>
    <dbReference type="NCBI Taxonomy" id="380704"/>
    <lineage>
        <taxon>Eukaryota</taxon>
        <taxon>Fungi</taxon>
        <taxon>Dikarya</taxon>
        <taxon>Ascomycota</taxon>
        <taxon>Pezizomycotina</taxon>
        <taxon>Eurotiomycetes</taxon>
        <taxon>Eurotiomycetidae</taxon>
        <taxon>Eurotiales</taxon>
        <taxon>Aspergillaceae</taxon>
        <taxon>Aspergillus</taxon>
        <taxon>Aspergillus subgen. Circumdati</taxon>
    </lineage>
</organism>
<keyword id="KW-1003">Cell membrane</keyword>
<keyword id="KW-0325">Glycoprotein</keyword>
<keyword id="KW-0472">Membrane</keyword>
<keyword id="KW-0812">Transmembrane</keyword>
<keyword id="KW-1133">Transmembrane helix</keyword>
<keyword id="KW-0813">Transport</keyword>